<accession>P43515</accession>
<keyword id="KW-0677">Repeat</keyword>
<keyword id="KW-0732">Signal</keyword>
<protein>
    <recommendedName>
        <fullName>Chorion class B protein Ld10</fullName>
    </recommendedName>
</protein>
<dbReference type="EMBL" id="U04662">
    <property type="protein sequence ID" value="AAA67862.1"/>
    <property type="molecule type" value="mRNA"/>
</dbReference>
<dbReference type="GO" id="GO:0042600">
    <property type="term" value="C:egg chorion"/>
    <property type="evidence" value="ECO:0007669"/>
    <property type="project" value="InterPro"/>
</dbReference>
<dbReference type="GO" id="GO:0005213">
    <property type="term" value="F:structural constituent of egg chorion"/>
    <property type="evidence" value="ECO:0007669"/>
    <property type="project" value="InterPro"/>
</dbReference>
<dbReference type="GO" id="GO:0007304">
    <property type="term" value="P:chorion-containing eggshell formation"/>
    <property type="evidence" value="ECO:0007669"/>
    <property type="project" value="InterPro"/>
</dbReference>
<dbReference type="InterPro" id="IPR002635">
    <property type="entry name" value="Chorion"/>
</dbReference>
<dbReference type="Pfam" id="PF01723">
    <property type="entry name" value="Chorion_1"/>
    <property type="match status" value="1"/>
</dbReference>
<proteinExistence type="evidence at transcript level"/>
<feature type="signal peptide" evidence="1">
    <location>
        <begin position="1"/>
        <end position="21"/>
    </location>
</feature>
<feature type="chain" id="PRO_0000005394" description="Chorion class B protein Ld10">
    <location>
        <begin position="22"/>
        <end position="191"/>
    </location>
</feature>
<reference key="1">
    <citation type="journal article" date="1994" name="J. Mol. Evol.">
        <title>Evolution of chorion gene families in lepidoptera: characterization of 15 cDNAs from the gypsy moth.</title>
        <authorList>
            <person name="Leclerc R.F."/>
            <person name="Regier J.C."/>
        </authorList>
    </citation>
    <scope>NUCLEOTIDE SEQUENCE [MRNA]</scope>
</reference>
<comment type="function">
    <text>This protein is one of many from the eggshell of the gypsy moth.</text>
</comment>
<comment type="similarity">
    <text evidence="2">Belongs to the chorion protein family.</text>
</comment>
<organism>
    <name type="scientific">Lymantria dispar</name>
    <name type="common">Gypsy moth</name>
    <name type="synonym">Porthetria dispar</name>
    <dbReference type="NCBI Taxonomy" id="13123"/>
    <lineage>
        <taxon>Eukaryota</taxon>
        <taxon>Metazoa</taxon>
        <taxon>Ecdysozoa</taxon>
        <taxon>Arthropoda</taxon>
        <taxon>Hexapoda</taxon>
        <taxon>Insecta</taxon>
        <taxon>Pterygota</taxon>
        <taxon>Neoptera</taxon>
        <taxon>Endopterygota</taxon>
        <taxon>Lepidoptera</taxon>
        <taxon>Glossata</taxon>
        <taxon>Ditrysia</taxon>
        <taxon>Noctuoidea</taxon>
        <taxon>Erebidae</taxon>
        <taxon>Lymantriinae</taxon>
        <taxon>Lymantria</taxon>
    </lineage>
</organism>
<name>CHB1_LYMDI</name>
<sequence length="191" mass="18370">MSAKIILVFCAQALFVQSALSQCTSRATVAADRGIIGGYGLGAPYGLAYGLEAPLGLGYGLGAPCGLAGPAIDITPTIGGGLPVSSASAIAPVGLVVASENVYEGILAAAGELPFVGTVGVEGVLPTAGAGAVHHSCGDGINAMASRDAAFAPGYAGAHGIGLGAYGLGVPALEVPALGYRAGWRGCGCGL</sequence>
<evidence type="ECO:0000255" key="1"/>
<evidence type="ECO:0000305" key="2"/>